<feature type="chain" id="PRO_0000153037" description="FeMo cofactor biosynthesis protein NifB">
    <location>
        <begin position="1"/>
        <end position="499"/>
    </location>
</feature>
<feature type="domain" description="Radical SAM core" evidence="3">
    <location>
        <begin position="49"/>
        <end position="298"/>
    </location>
</feature>
<feature type="binding site" evidence="2">
    <location>
        <position position="63"/>
    </location>
    <ligand>
        <name>[4Fe-4S] cluster</name>
        <dbReference type="ChEBI" id="CHEBI:49883"/>
        <label>1</label>
        <note>4Fe-4S-S-AdoMet</note>
    </ligand>
</feature>
<feature type="binding site" evidence="2">
    <location>
        <position position="67"/>
    </location>
    <ligand>
        <name>[4Fe-4S] cluster</name>
        <dbReference type="ChEBI" id="CHEBI:49883"/>
        <label>1</label>
        <note>4Fe-4S-S-AdoMet</note>
    </ligand>
</feature>
<feature type="binding site" evidence="2">
    <location>
        <position position="69"/>
    </location>
    <ligand>
        <name>S-adenosyl-L-methionine</name>
        <dbReference type="ChEBI" id="CHEBI:59789"/>
    </ligand>
</feature>
<feature type="binding site" evidence="2">
    <location>
        <position position="70"/>
    </location>
    <ligand>
        <name>[4Fe-4S] cluster</name>
        <dbReference type="ChEBI" id="CHEBI:49883"/>
        <label>1</label>
        <note>4Fe-4S-S-AdoMet</note>
    </ligand>
</feature>
<feature type="binding site" evidence="2">
    <location>
        <position position="117"/>
    </location>
    <ligand>
        <name>S-adenosyl-L-methionine</name>
        <dbReference type="ChEBI" id="CHEBI:59789"/>
    </ligand>
</feature>
<feature type="binding site" evidence="2">
    <location>
        <position position="169"/>
    </location>
    <ligand>
        <name>S-adenosyl-L-methionine</name>
        <dbReference type="ChEBI" id="CHEBI:59789"/>
    </ligand>
</feature>
<feature type="binding site" evidence="2">
    <location>
        <position position="221"/>
    </location>
    <ligand>
        <name>S-adenosyl-L-methionine</name>
        <dbReference type="ChEBI" id="CHEBI:59789"/>
    </ligand>
</feature>
<feature type="binding site" evidence="1">
    <location>
        <position position="294"/>
    </location>
    <ligand>
        <name>[4Fe-4S] cluster</name>
        <dbReference type="ChEBI" id="CHEBI:49883"/>
        <label>2</label>
    </ligand>
</feature>
<feature type="binding site" evidence="1">
    <location>
        <position position="297"/>
    </location>
    <ligand>
        <name>[4Fe-4S] cluster</name>
        <dbReference type="ChEBI" id="CHEBI:49883"/>
        <label>2</label>
    </ligand>
</feature>
<feature type="sequence conflict" description="In Ref. 1; AAA26221." evidence="4" ref="1">
    <original>SCG</original>
    <variation>RLR</variation>
    <location>
        <begin position="20"/>
        <end position="22"/>
    </location>
</feature>
<feature type="sequence conflict" description="In Ref. 1; AAA26221." evidence="4" ref="1">
    <original>G</original>
    <variation>A</variation>
    <location>
        <position position="117"/>
    </location>
</feature>
<feature type="sequence conflict" description="In Ref. 1; AAA26221." evidence="4" ref="1">
    <original>RQCR</original>
    <variation>GSA</variation>
    <location>
        <begin position="295"/>
        <end position="298"/>
    </location>
</feature>
<protein>
    <recommendedName>
        <fullName>FeMo cofactor biosynthesis protein NifB</fullName>
        <ecNumber>4.-.-.-</ecNumber>
    </recommendedName>
    <alternativeName>
        <fullName>Nitrogenase cofactor maturase NifB</fullName>
    </alternativeName>
    <alternativeName>
        <fullName>Radical SAM assemblase NifB</fullName>
    </alternativeName>
</protein>
<keyword id="KW-0004">4Fe-4S</keyword>
<keyword id="KW-0408">Iron</keyword>
<keyword id="KW-0411">Iron-sulfur</keyword>
<keyword id="KW-0456">Lyase</keyword>
<keyword id="KW-0479">Metal-binding</keyword>
<keyword id="KW-0535">Nitrogen fixation</keyword>
<keyword id="KW-1185">Reference proteome</keyword>
<keyword id="KW-0949">S-adenosyl-L-methionine</keyword>
<reference key="1">
    <citation type="journal article" date="1986" name="J. Bacteriol.">
        <title>Organization and characterization of genes essential for symbiotic nitrogen fixation from Bradyrhizobium japonicum I110.</title>
        <authorList>
            <person name="Noti J.D."/>
            <person name="Folkerts O."/>
            <person name="Turken A.N."/>
            <person name="Szalay A.A."/>
        </authorList>
    </citation>
    <scope>NUCLEOTIDE SEQUENCE [GENOMIC DNA]</scope>
    <source>
        <strain>I110</strain>
    </source>
</reference>
<reference key="2">
    <citation type="journal article" date="2001" name="J. Bacteriol.">
        <title>Potential symbiosis-specific genes uncovered by sequencing a 410-kb DNA region of the Bradyrhizobium japonicum chromosome.</title>
        <authorList>
            <person name="Goettfert M."/>
            <person name="Roethlisberger S."/>
            <person name="Kuendig C."/>
            <person name="Beck C."/>
            <person name="Marty R."/>
            <person name="Hennecke H."/>
        </authorList>
    </citation>
    <scope>NUCLEOTIDE SEQUENCE [GENOMIC DNA]</scope>
    <source>
        <strain>USDA 110spc4</strain>
    </source>
</reference>
<reference key="3">
    <citation type="journal article" date="2002" name="DNA Res.">
        <title>Complete genomic sequence of nitrogen-fixing symbiotic bacterium Bradyrhizobium japonicum USDA110.</title>
        <authorList>
            <person name="Kaneko T."/>
            <person name="Nakamura Y."/>
            <person name="Sato S."/>
            <person name="Minamisawa K."/>
            <person name="Uchiumi T."/>
            <person name="Sasamoto S."/>
            <person name="Watanabe A."/>
            <person name="Idesawa K."/>
            <person name="Iriguchi M."/>
            <person name="Kawashima K."/>
            <person name="Kohara M."/>
            <person name="Matsumoto M."/>
            <person name="Shimpo S."/>
            <person name="Tsuruoka H."/>
            <person name="Wada T."/>
            <person name="Yamada M."/>
            <person name="Tabata S."/>
        </authorList>
    </citation>
    <scope>NUCLEOTIDE SEQUENCE [LARGE SCALE GENOMIC DNA]</scope>
    <source>
        <strain>JCM 10833 / BCRC 13528 / IAM 13628 / NBRC 14792 / USDA 110</strain>
    </source>
</reference>
<organism>
    <name type="scientific">Bradyrhizobium diazoefficiens (strain JCM 10833 / BCRC 13528 / IAM 13628 / NBRC 14792 / USDA 110)</name>
    <dbReference type="NCBI Taxonomy" id="224911"/>
    <lineage>
        <taxon>Bacteria</taxon>
        <taxon>Pseudomonadati</taxon>
        <taxon>Pseudomonadota</taxon>
        <taxon>Alphaproteobacteria</taxon>
        <taxon>Hyphomicrobiales</taxon>
        <taxon>Nitrobacteraceae</taxon>
        <taxon>Bradyrhizobium</taxon>
    </lineage>
</organism>
<gene>
    <name type="primary">nifB</name>
    <name type="ordered locus">blr1759</name>
</gene>
<comment type="function">
    <text evidence="1">Involved in the biosynthesis of the iron-molybdenum cofactor (FeMo-co or M-cluster) found in the dinitrogenase enzyme of the nitrogenase complex in nitrogen-fixing microorganisms. NifB catalyzes the crucial step of radical SAM-dependent carbide insertion that occurs concomitant with the insertion of a 9th sulfur and the rearrangement/coupling of two [4Fe-4S] clusters into a [8Fe-9S-C] cluster, the precursor to the M-cluster.</text>
</comment>
<comment type="cofactor">
    <cofactor evidence="1">
        <name>[4Fe-4S] cluster</name>
        <dbReference type="ChEBI" id="CHEBI:49883"/>
    </cofactor>
    <text evidence="1">Binds 3 [4Fe-4S] clusters per monomer. One cluster is coordinated with 3 cysteines and an exchangeable S-adenosyl-L-methionine. The two others probably act as substrate.</text>
</comment>
<comment type="pathway">
    <text evidence="1">Cofactor biosynthesis; Fe-Mo cofactor biosynthesis.</text>
</comment>
<comment type="similarity">
    <text evidence="4">Belongs to the radical SAM superfamily. NifB family.</text>
</comment>
<evidence type="ECO:0000250" key="1">
    <source>
        <dbReference type="UniProtKB" id="D5VRM1"/>
    </source>
</evidence>
<evidence type="ECO:0000250" key="2">
    <source>
        <dbReference type="UniProtKB" id="P69848"/>
    </source>
</evidence>
<evidence type="ECO:0000255" key="3">
    <source>
        <dbReference type="PROSITE-ProRule" id="PRU01266"/>
    </source>
</evidence>
<evidence type="ECO:0000305" key="4"/>
<name>NIFB_BRADU</name>
<accession>P06770</accession>
<accession>Q9ANM2</accession>
<proteinExistence type="inferred from homology"/>
<dbReference type="EC" id="4.-.-.-"/>
<dbReference type="EMBL" id="M13688">
    <property type="protein sequence ID" value="AAA26221.1"/>
    <property type="molecule type" value="Genomic_DNA"/>
</dbReference>
<dbReference type="EMBL" id="AH010242">
    <property type="protein sequence ID" value="AAG60744.1"/>
    <property type="molecule type" value="Genomic_DNA"/>
</dbReference>
<dbReference type="EMBL" id="BA000040">
    <property type="protein sequence ID" value="BAC47024.1"/>
    <property type="molecule type" value="Genomic_DNA"/>
</dbReference>
<dbReference type="PIR" id="A24495">
    <property type="entry name" value="A24495"/>
</dbReference>
<dbReference type="RefSeq" id="NP_768399.1">
    <property type="nucleotide sequence ID" value="NC_004463.1"/>
</dbReference>
<dbReference type="RefSeq" id="WP_011084568.1">
    <property type="nucleotide sequence ID" value="NZ_CP011360.1"/>
</dbReference>
<dbReference type="SMR" id="P06770"/>
<dbReference type="STRING" id="224911.AAV28_05720"/>
<dbReference type="EnsemblBacteria" id="BAC47024">
    <property type="protein sequence ID" value="BAC47024"/>
    <property type="gene ID" value="BAC47024"/>
</dbReference>
<dbReference type="GeneID" id="92969958"/>
<dbReference type="KEGG" id="bja:blr1759"/>
<dbReference type="PATRIC" id="fig|224911.5.peg.1784"/>
<dbReference type="eggNOG" id="COG0535">
    <property type="taxonomic scope" value="Bacteria"/>
</dbReference>
<dbReference type="HOGENOM" id="CLU_027639_0_0_5"/>
<dbReference type="InParanoid" id="P06770"/>
<dbReference type="OrthoDB" id="9785734at2"/>
<dbReference type="PhylomeDB" id="P06770"/>
<dbReference type="UniPathway" id="UPA00782"/>
<dbReference type="Proteomes" id="UP000002526">
    <property type="component" value="Chromosome"/>
</dbReference>
<dbReference type="GO" id="GO:0051539">
    <property type="term" value="F:4 iron, 4 sulfur cluster binding"/>
    <property type="evidence" value="ECO:0007669"/>
    <property type="project" value="UniProtKB-KW"/>
</dbReference>
<dbReference type="GO" id="GO:0016829">
    <property type="term" value="F:lyase activity"/>
    <property type="evidence" value="ECO:0007669"/>
    <property type="project" value="UniProtKB-KW"/>
</dbReference>
<dbReference type="GO" id="GO:0046872">
    <property type="term" value="F:metal ion binding"/>
    <property type="evidence" value="ECO:0007669"/>
    <property type="project" value="UniProtKB-KW"/>
</dbReference>
<dbReference type="GO" id="GO:0009399">
    <property type="term" value="P:nitrogen fixation"/>
    <property type="evidence" value="ECO:0007669"/>
    <property type="project" value="UniProtKB-KW"/>
</dbReference>
<dbReference type="CDD" id="cd00852">
    <property type="entry name" value="NifB"/>
    <property type="match status" value="1"/>
</dbReference>
<dbReference type="CDD" id="cd01335">
    <property type="entry name" value="Radical_SAM"/>
    <property type="match status" value="1"/>
</dbReference>
<dbReference type="Gene3D" id="3.20.20.70">
    <property type="entry name" value="Aldolase class I"/>
    <property type="match status" value="1"/>
</dbReference>
<dbReference type="Gene3D" id="3.30.420.130">
    <property type="entry name" value="Dinitrogenase iron-molybdenum cofactor biosynthesis domain"/>
    <property type="match status" value="1"/>
</dbReference>
<dbReference type="InterPro" id="IPR013785">
    <property type="entry name" value="Aldolase_TIM"/>
</dbReference>
<dbReference type="InterPro" id="IPR003731">
    <property type="entry name" value="Di-Nase_FeMo-co_biosynth"/>
</dbReference>
<dbReference type="InterPro" id="IPR036105">
    <property type="entry name" value="DiNase_FeMo-co_biosyn_sf"/>
</dbReference>
<dbReference type="InterPro" id="IPR000385">
    <property type="entry name" value="MoaA_NifB_PqqE_Fe-S-bd_CS"/>
</dbReference>
<dbReference type="InterPro" id="IPR005980">
    <property type="entry name" value="Nase_CF_NifB"/>
</dbReference>
<dbReference type="InterPro" id="IPR034165">
    <property type="entry name" value="NifB_C"/>
</dbReference>
<dbReference type="InterPro" id="IPR007197">
    <property type="entry name" value="rSAM"/>
</dbReference>
<dbReference type="NCBIfam" id="TIGR01290">
    <property type="entry name" value="nifB"/>
    <property type="match status" value="1"/>
</dbReference>
<dbReference type="PANTHER" id="PTHR43787:SF13">
    <property type="entry name" value="FEMO COFACTOR BIOSYNTHESIS PROTEIN NIFB"/>
    <property type="match status" value="1"/>
</dbReference>
<dbReference type="PANTHER" id="PTHR43787">
    <property type="entry name" value="FEMO COFACTOR BIOSYNTHESIS PROTEIN NIFB-RELATED"/>
    <property type="match status" value="1"/>
</dbReference>
<dbReference type="Pfam" id="PF02579">
    <property type="entry name" value="Nitro_FeMo-Co"/>
    <property type="match status" value="1"/>
</dbReference>
<dbReference type="Pfam" id="PF04055">
    <property type="entry name" value="Radical_SAM"/>
    <property type="match status" value="1"/>
</dbReference>
<dbReference type="SFLD" id="SFLDF00281">
    <property type="entry name" value="FeMo_cofactor_biosynthesis_pro"/>
    <property type="match status" value="1"/>
</dbReference>
<dbReference type="SFLD" id="SFLDG01068">
    <property type="entry name" value="FeMo_cofactor_biosynthesis_pro"/>
    <property type="match status" value="1"/>
</dbReference>
<dbReference type="SFLD" id="SFLDG01067">
    <property type="entry name" value="SPASM/twitch_domain_containing"/>
    <property type="match status" value="1"/>
</dbReference>
<dbReference type="SUPFAM" id="SSF53146">
    <property type="entry name" value="Nitrogenase accessory factor-like"/>
    <property type="match status" value="1"/>
</dbReference>
<dbReference type="SUPFAM" id="SSF102114">
    <property type="entry name" value="Radical SAM enzymes"/>
    <property type="match status" value="1"/>
</dbReference>
<dbReference type="PROSITE" id="PS01305">
    <property type="entry name" value="MOAA_NIFB_PQQE"/>
    <property type="match status" value="1"/>
</dbReference>
<dbReference type="PROSITE" id="PS51918">
    <property type="entry name" value="RADICAL_SAM"/>
    <property type="match status" value="1"/>
</dbReference>
<sequence>MQSITEHKGCRASAKTGRASCGSQAGRGDLPVEIWERVKNHPCYSEDAHHHYARMHVAVAPACNIQCNYCNRKYDCANESRPGVVSEKLTPEQAVRKVIAVATTIPQMTVLGIAGPGDALANPAKTFKTLALVTEAAPDIKLCLSTNGLALPDYVDTIVRAKVDHVTITINMVDPEIGAKIYPWIFFNHKRYTGIEAARILTNRQLQGLEMLSERGILCKINSVMIPNINDDHLVEVNKAVTSRGAFLHNIMPLISVPEHGTAFGLNGQRGPTAQELKTLQDACEGKINMMRHCRQCRADAVGLLGEDRSAEFTNDQVMKMDVHYDLEMRKAYQKRVENERVSKVAAGQKELAGVSGEMSAITVLVAVATKGSGLINEHFGHAKEFQLYELSTSGAKFVGLRRVEGYCQAGYGEEDRLSVIMRDIRDCHAVFVAKIGGCPKSGLIKAGIEPVDQFAYEYIEKSTIAWFRAYVGKVKRGEIQHVQRGVPPRWPGDRISAA</sequence>